<name>SRPK3_HUMAN</name>
<accession>Q9UPE1</accession>
<accession>Q13583</accession>
<accession>Q4F970</accession>
<accession>Q562F5</accession>
<accession>Q9UM62</accession>
<gene>
    <name type="primary">SRPK3</name>
    <name type="synonym">MSSK1</name>
    <name type="synonym">STK23</name>
</gene>
<comment type="function">
    <text evidence="1">Serine/arginine-rich protein-specific kinase which specifically phosphorylates its substrates at serine residues located in regions rich in arginine/serine dipeptides, known as RS domains. Phosphorylates the SR splicing factor SRSF1 and the lamin-B receptor (LBR) in vitro. Required for normal muscle development (By similarity).</text>
</comment>
<comment type="catalytic activity">
    <reaction>
        <text>L-seryl-[protein] + ATP = O-phospho-L-seryl-[protein] + ADP + H(+)</text>
        <dbReference type="Rhea" id="RHEA:17989"/>
        <dbReference type="Rhea" id="RHEA-COMP:9863"/>
        <dbReference type="Rhea" id="RHEA-COMP:11604"/>
        <dbReference type="ChEBI" id="CHEBI:15378"/>
        <dbReference type="ChEBI" id="CHEBI:29999"/>
        <dbReference type="ChEBI" id="CHEBI:30616"/>
        <dbReference type="ChEBI" id="CHEBI:83421"/>
        <dbReference type="ChEBI" id="CHEBI:456216"/>
        <dbReference type="EC" id="2.7.11.1"/>
    </reaction>
</comment>
<comment type="catalytic activity">
    <reaction>
        <text>L-threonyl-[protein] + ATP = O-phospho-L-threonyl-[protein] + ADP + H(+)</text>
        <dbReference type="Rhea" id="RHEA:46608"/>
        <dbReference type="Rhea" id="RHEA-COMP:11060"/>
        <dbReference type="Rhea" id="RHEA-COMP:11605"/>
        <dbReference type="ChEBI" id="CHEBI:15378"/>
        <dbReference type="ChEBI" id="CHEBI:30013"/>
        <dbReference type="ChEBI" id="CHEBI:30616"/>
        <dbReference type="ChEBI" id="CHEBI:61977"/>
        <dbReference type="ChEBI" id="CHEBI:456216"/>
        <dbReference type="EC" id="2.7.11.1"/>
    </reaction>
</comment>
<comment type="interaction">
    <interactant intactId="EBI-6381269">
        <id>Q9UPE1</id>
    </interactant>
    <interactant intactId="EBI-539478">
        <id>Q96SB4</id>
        <label>SRPK1</label>
    </interactant>
    <organismsDiffer>false</organismsDiffer>
    <experiments>3</experiments>
</comment>
<comment type="interaction">
    <interactant intactId="EBI-6381269">
        <id>Q9UPE1</id>
    </interactant>
    <interactant intactId="EBI-356498">
        <id>P62258</id>
        <label>YWHAE</label>
    </interactant>
    <organismsDiffer>false</organismsDiffer>
    <experiments>4</experiments>
</comment>
<comment type="subcellular location">
    <subcellularLocation>
        <location evidence="7">Nucleus</location>
    </subcellularLocation>
    <subcellularLocation>
        <location evidence="7">Cytoplasm</location>
    </subcellularLocation>
</comment>
<comment type="alternative products">
    <event type="alternative splicing"/>
    <isoform>
        <id>Q9UPE1-1</id>
        <name>1</name>
        <sequence type="displayed"/>
    </isoform>
    <isoform>
        <id>Q9UPE1-2</id>
        <name>2</name>
        <sequence type="described" ref="VSP_040939 VSP_040940 VSP_040941"/>
    </isoform>
    <isoform>
        <id>Q9UPE1-3</id>
        <name>3</name>
        <sequence type="described" ref="VSP_040940 VSP_040941"/>
    </isoform>
    <isoform>
        <id>Q9UPE1-4</id>
        <name>4</name>
        <sequence type="described" ref="VSP_040940"/>
    </isoform>
</comment>
<comment type="tissue specificity">
    <text evidence="5 7">Expressed in skeletal and heart muscle (PubMed:11063724, PubMed:39073169). Also expressed in the fetal brain.</text>
</comment>
<comment type="disease" evidence="7">
    <disease id="DI-06969">
        <name>Intellectual developmental disorder, X-linked 114</name>
        <acronym>XLID114</acronym>
        <description>A disorder characterized by mild to severe intellectual disability, developmental delay, agenesis of the corpus callosum, abnormal eye movement, and ataxia.</description>
        <dbReference type="MIM" id="301134"/>
    </disease>
    <text>The disease may be caused by variants affecting the gene represented in this entry.</text>
</comment>
<comment type="similarity">
    <text evidence="11">Belongs to the protein kinase superfamily. CMGC Ser/Thr protein kinase family.</text>
</comment>
<reference key="1">
    <citation type="submission" date="1997-09" db="EMBL/GenBank/DDBJ databases">
        <title>Cloning and sequencing of a new human serine kinase gene located in human Xq28.</title>
        <authorList>
            <person name="Brenner V."/>
            <person name="Rosenthal A."/>
            <person name="Platzer M."/>
        </authorList>
    </citation>
    <scope>NUCLEOTIDE SEQUENCE [MRNA] (ISOFORMS 2 AND 3)</scope>
    <source>
        <tissue>Skeletal muscle</tissue>
    </source>
</reference>
<reference key="2">
    <citation type="submission" date="2005-06" db="EMBL/GenBank/DDBJ databases">
        <authorList>
            <person name="Zhou G."/>
            <person name="Nong W."/>
            <person name="Li H."/>
            <person name="Ke R."/>
            <person name="Shen C."/>
            <person name="Zhong G."/>
            <person name="Zheng Z."/>
            <person name="Liang M."/>
            <person name="Wen S."/>
            <person name="Lin L."/>
            <person name="Yang S."/>
        </authorList>
    </citation>
    <scope>NUCLEOTIDE SEQUENCE [MRNA] (ISOFORM 4)</scope>
</reference>
<reference key="3">
    <citation type="journal article" date="2004" name="Nat. Genet.">
        <title>Complete sequencing and characterization of 21,243 full-length human cDNAs.</title>
        <authorList>
            <person name="Ota T."/>
            <person name="Suzuki Y."/>
            <person name="Nishikawa T."/>
            <person name="Otsuki T."/>
            <person name="Sugiyama T."/>
            <person name="Irie R."/>
            <person name="Wakamatsu A."/>
            <person name="Hayashi K."/>
            <person name="Sato H."/>
            <person name="Nagai K."/>
            <person name="Kimura K."/>
            <person name="Makita H."/>
            <person name="Sekine M."/>
            <person name="Obayashi M."/>
            <person name="Nishi T."/>
            <person name="Shibahara T."/>
            <person name="Tanaka T."/>
            <person name="Ishii S."/>
            <person name="Yamamoto J."/>
            <person name="Saito K."/>
            <person name="Kawai Y."/>
            <person name="Isono Y."/>
            <person name="Nakamura Y."/>
            <person name="Nagahari K."/>
            <person name="Murakami K."/>
            <person name="Yasuda T."/>
            <person name="Iwayanagi T."/>
            <person name="Wagatsuma M."/>
            <person name="Shiratori A."/>
            <person name="Sudo H."/>
            <person name="Hosoiri T."/>
            <person name="Kaku Y."/>
            <person name="Kodaira H."/>
            <person name="Kondo H."/>
            <person name="Sugawara M."/>
            <person name="Takahashi M."/>
            <person name="Kanda K."/>
            <person name="Yokoi T."/>
            <person name="Furuya T."/>
            <person name="Kikkawa E."/>
            <person name="Omura Y."/>
            <person name="Abe K."/>
            <person name="Kamihara K."/>
            <person name="Katsuta N."/>
            <person name="Sato K."/>
            <person name="Tanikawa M."/>
            <person name="Yamazaki M."/>
            <person name="Ninomiya K."/>
            <person name="Ishibashi T."/>
            <person name="Yamashita H."/>
            <person name="Murakawa K."/>
            <person name="Fujimori K."/>
            <person name="Tanai H."/>
            <person name="Kimata M."/>
            <person name="Watanabe M."/>
            <person name="Hiraoka S."/>
            <person name="Chiba Y."/>
            <person name="Ishida S."/>
            <person name="Ono Y."/>
            <person name="Takiguchi S."/>
            <person name="Watanabe S."/>
            <person name="Yosida M."/>
            <person name="Hotuta T."/>
            <person name="Kusano J."/>
            <person name="Kanehori K."/>
            <person name="Takahashi-Fujii A."/>
            <person name="Hara H."/>
            <person name="Tanase T.-O."/>
            <person name="Nomura Y."/>
            <person name="Togiya S."/>
            <person name="Komai F."/>
            <person name="Hara R."/>
            <person name="Takeuchi K."/>
            <person name="Arita M."/>
            <person name="Imose N."/>
            <person name="Musashino K."/>
            <person name="Yuuki H."/>
            <person name="Oshima A."/>
            <person name="Sasaki N."/>
            <person name="Aotsuka S."/>
            <person name="Yoshikawa Y."/>
            <person name="Matsunawa H."/>
            <person name="Ichihara T."/>
            <person name="Shiohata N."/>
            <person name="Sano S."/>
            <person name="Moriya S."/>
            <person name="Momiyama H."/>
            <person name="Satoh N."/>
            <person name="Takami S."/>
            <person name="Terashima Y."/>
            <person name="Suzuki O."/>
            <person name="Nakagawa S."/>
            <person name="Senoh A."/>
            <person name="Mizoguchi H."/>
            <person name="Goto Y."/>
            <person name="Shimizu F."/>
            <person name="Wakebe H."/>
            <person name="Hishigaki H."/>
            <person name="Watanabe T."/>
            <person name="Sugiyama A."/>
            <person name="Takemoto M."/>
            <person name="Kawakami B."/>
            <person name="Yamazaki M."/>
            <person name="Watanabe K."/>
            <person name="Kumagai A."/>
            <person name="Itakura S."/>
            <person name="Fukuzumi Y."/>
            <person name="Fujimori Y."/>
            <person name="Komiyama M."/>
            <person name="Tashiro H."/>
            <person name="Tanigami A."/>
            <person name="Fujiwara T."/>
            <person name="Ono T."/>
            <person name="Yamada K."/>
            <person name="Fujii Y."/>
            <person name="Ozaki K."/>
            <person name="Hirao M."/>
            <person name="Ohmori Y."/>
            <person name="Kawabata A."/>
            <person name="Hikiji T."/>
            <person name="Kobatake N."/>
            <person name="Inagaki H."/>
            <person name="Ikema Y."/>
            <person name="Okamoto S."/>
            <person name="Okitani R."/>
            <person name="Kawakami T."/>
            <person name="Noguchi S."/>
            <person name="Itoh T."/>
            <person name="Shigeta K."/>
            <person name="Senba T."/>
            <person name="Matsumura K."/>
            <person name="Nakajima Y."/>
            <person name="Mizuno T."/>
            <person name="Morinaga M."/>
            <person name="Sasaki M."/>
            <person name="Togashi T."/>
            <person name="Oyama M."/>
            <person name="Hata H."/>
            <person name="Watanabe M."/>
            <person name="Komatsu T."/>
            <person name="Mizushima-Sugano J."/>
            <person name="Satoh T."/>
            <person name="Shirai Y."/>
            <person name="Takahashi Y."/>
            <person name="Nakagawa K."/>
            <person name="Okumura K."/>
            <person name="Nagase T."/>
            <person name="Nomura N."/>
            <person name="Kikuchi H."/>
            <person name="Masuho Y."/>
            <person name="Yamashita R."/>
            <person name="Nakai K."/>
            <person name="Yada T."/>
            <person name="Nakamura Y."/>
            <person name="Ohara O."/>
            <person name="Isogai T."/>
            <person name="Sugano S."/>
        </authorList>
    </citation>
    <scope>NUCLEOTIDE SEQUENCE [LARGE SCALE MRNA] (ISOFORM 1)</scope>
    <source>
        <tissue>Testis</tissue>
    </source>
</reference>
<reference key="4">
    <citation type="journal article" date="2005" name="Nature">
        <title>The DNA sequence of the human X chromosome.</title>
        <authorList>
            <person name="Ross M.T."/>
            <person name="Grafham D.V."/>
            <person name="Coffey A.J."/>
            <person name="Scherer S."/>
            <person name="McLay K."/>
            <person name="Muzny D."/>
            <person name="Platzer M."/>
            <person name="Howell G.R."/>
            <person name="Burrows C."/>
            <person name="Bird C.P."/>
            <person name="Frankish A."/>
            <person name="Lovell F.L."/>
            <person name="Howe K.L."/>
            <person name="Ashurst J.L."/>
            <person name="Fulton R.S."/>
            <person name="Sudbrak R."/>
            <person name="Wen G."/>
            <person name="Jones M.C."/>
            <person name="Hurles M.E."/>
            <person name="Andrews T.D."/>
            <person name="Scott C.E."/>
            <person name="Searle S."/>
            <person name="Ramser J."/>
            <person name="Whittaker A."/>
            <person name="Deadman R."/>
            <person name="Carter N.P."/>
            <person name="Hunt S.E."/>
            <person name="Chen R."/>
            <person name="Cree A."/>
            <person name="Gunaratne P."/>
            <person name="Havlak P."/>
            <person name="Hodgson A."/>
            <person name="Metzker M.L."/>
            <person name="Richards S."/>
            <person name="Scott G."/>
            <person name="Steffen D."/>
            <person name="Sodergren E."/>
            <person name="Wheeler D.A."/>
            <person name="Worley K.C."/>
            <person name="Ainscough R."/>
            <person name="Ambrose K.D."/>
            <person name="Ansari-Lari M.A."/>
            <person name="Aradhya S."/>
            <person name="Ashwell R.I."/>
            <person name="Babbage A.K."/>
            <person name="Bagguley C.L."/>
            <person name="Ballabio A."/>
            <person name="Banerjee R."/>
            <person name="Barker G.E."/>
            <person name="Barlow K.F."/>
            <person name="Barrett I.P."/>
            <person name="Bates K.N."/>
            <person name="Beare D.M."/>
            <person name="Beasley H."/>
            <person name="Beasley O."/>
            <person name="Beck A."/>
            <person name="Bethel G."/>
            <person name="Blechschmidt K."/>
            <person name="Brady N."/>
            <person name="Bray-Allen S."/>
            <person name="Bridgeman A.M."/>
            <person name="Brown A.J."/>
            <person name="Brown M.J."/>
            <person name="Bonnin D."/>
            <person name="Bruford E.A."/>
            <person name="Buhay C."/>
            <person name="Burch P."/>
            <person name="Burford D."/>
            <person name="Burgess J."/>
            <person name="Burrill W."/>
            <person name="Burton J."/>
            <person name="Bye J.M."/>
            <person name="Carder C."/>
            <person name="Carrel L."/>
            <person name="Chako J."/>
            <person name="Chapman J.C."/>
            <person name="Chavez D."/>
            <person name="Chen E."/>
            <person name="Chen G."/>
            <person name="Chen Y."/>
            <person name="Chen Z."/>
            <person name="Chinault C."/>
            <person name="Ciccodicola A."/>
            <person name="Clark S.Y."/>
            <person name="Clarke G."/>
            <person name="Clee C.M."/>
            <person name="Clegg S."/>
            <person name="Clerc-Blankenburg K."/>
            <person name="Clifford K."/>
            <person name="Cobley V."/>
            <person name="Cole C.G."/>
            <person name="Conquer J.S."/>
            <person name="Corby N."/>
            <person name="Connor R.E."/>
            <person name="David R."/>
            <person name="Davies J."/>
            <person name="Davis C."/>
            <person name="Davis J."/>
            <person name="Delgado O."/>
            <person name="Deshazo D."/>
            <person name="Dhami P."/>
            <person name="Ding Y."/>
            <person name="Dinh H."/>
            <person name="Dodsworth S."/>
            <person name="Draper H."/>
            <person name="Dugan-Rocha S."/>
            <person name="Dunham A."/>
            <person name="Dunn M."/>
            <person name="Durbin K.J."/>
            <person name="Dutta I."/>
            <person name="Eades T."/>
            <person name="Ellwood M."/>
            <person name="Emery-Cohen A."/>
            <person name="Errington H."/>
            <person name="Evans K.L."/>
            <person name="Faulkner L."/>
            <person name="Francis F."/>
            <person name="Frankland J."/>
            <person name="Fraser A.E."/>
            <person name="Galgoczy P."/>
            <person name="Gilbert J."/>
            <person name="Gill R."/>
            <person name="Gloeckner G."/>
            <person name="Gregory S.G."/>
            <person name="Gribble S."/>
            <person name="Griffiths C."/>
            <person name="Grocock R."/>
            <person name="Gu Y."/>
            <person name="Gwilliam R."/>
            <person name="Hamilton C."/>
            <person name="Hart E.A."/>
            <person name="Hawes A."/>
            <person name="Heath P.D."/>
            <person name="Heitmann K."/>
            <person name="Hennig S."/>
            <person name="Hernandez J."/>
            <person name="Hinzmann B."/>
            <person name="Ho S."/>
            <person name="Hoffs M."/>
            <person name="Howden P.J."/>
            <person name="Huckle E.J."/>
            <person name="Hume J."/>
            <person name="Hunt P.J."/>
            <person name="Hunt A.R."/>
            <person name="Isherwood J."/>
            <person name="Jacob L."/>
            <person name="Johnson D."/>
            <person name="Jones S."/>
            <person name="de Jong P.J."/>
            <person name="Joseph S.S."/>
            <person name="Keenan S."/>
            <person name="Kelly S."/>
            <person name="Kershaw J.K."/>
            <person name="Khan Z."/>
            <person name="Kioschis P."/>
            <person name="Klages S."/>
            <person name="Knights A.J."/>
            <person name="Kosiura A."/>
            <person name="Kovar-Smith C."/>
            <person name="Laird G.K."/>
            <person name="Langford C."/>
            <person name="Lawlor S."/>
            <person name="Leversha M."/>
            <person name="Lewis L."/>
            <person name="Liu W."/>
            <person name="Lloyd C."/>
            <person name="Lloyd D.M."/>
            <person name="Loulseged H."/>
            <person name="Loveland J.E."/>
            <person name="Lovell J.D."/>
            <person name="Lozado R."/>
            <person name="Lu J."/>
            <person name="Lyne R."/>
            <person name="Ma J."/>
            <person name="Maheshwari M."/>
            <person name="Matthews L.H."/>
            <person name="McDowall J."/>
            <person name="McLaren S."/>
            <person name="McMurray A."/>
            <person name="Meidl P."/>
            <person name="Meitinger T."/>
            <person name="Milne S."/>
            <person name="Miner G."/>
            <person name="Mistry S.L."/>
            <person name="Morgan M."/>
            <person name="Morris S."/>
            <person name="Mueller I."/>
            <person name="Mullikin J.C."/>
            <person name="Nguyen N."/>
            <person name="Nordsiek G."/>
            <person name="Nyakatura G."/>
            <person name="O'dell C.N."/>
            <person name="Okwuonu G."/>
            <person name="Palmer S."/>
            <person name="Pandian R."/>
            <person name="Parker D."/>
            <person name="Parrish J."/>
            <person name="Pasternak S."/>
            <person name="Patel D."/>
            <person name="Pearce A.V."/>
            <person name="Pearson D.M."/>
            <person name="Pelan S.E."/>
            <person name="Perez L."/>
            <person name="Porter K.M."/>
            <person name="Ramsey Y."/>
            <person name="Reichwald K."/>
            <person name="Rhodes S."/>
            <person name="Ridler K.A."/>
            <person name="Schlessinger D."/>
            <person name="Schueler M.G."/>
            <person name="Sehra H.K."/>
            <person name="Shaw-Smith C."/>
            <person name="Shen H."/>
            <person name="Sheridan E.M."/>
            <person name="Shownkeen R."/>
            <person name="Skuce C.D."/>
            <person name="Smith M.L."/>
            <person name="Sotheran E.C."/>
            <person name="Steingruber H.E."/>
            <person name="Steward C.A."/>
            <person name="Storey R."/>
            <person name="Swann R.M."/>
            <person name="Swarbreck D."/>
            <person name="Tabor P.E."/>
            <person name="Taudien S."/>
            <person name="Taylor T."/>
            <person name="Teague B."/>
            <person name="Thomas K."/>
            <person name="Thorpe A."/>
            <person name="Timms K."/>
            <person name="Tracey A."/>
            <person name="Trevanion S."/>
            <person name="Tromans A.C."/>
            <person name="d'Urso M."/>
            <person name="Verduzco D."/>
            <person name="Villasana D."/>
            <person name="Waldron L."/>
            <person name="Wall M."/>
            <person name="Wang Q."/>
            <person name="Warren J."/>
            <person name="Warry G.L."/>
            <person name="Wei X."/>
            <person name="West A."/>
            <person name="Whitehead S.L."/>
            <person name="Whiteley M.N."/>
            <person name="Wilkinson J.E."/>
            <person name="Willey D.L."/>
            <person name="Williams G."/>
            <person name="Williams L."/>
            <person name="Williamson A."/>
            <person name="Williamson H."/>
            <person name="Wilming L."/>
            <person name="Woodmansey R.L."/>
            <person name="Wray P.W."/>
            <person name="Yen J."/>
            <person name="Zhang J."/>
            <person name="Zhou J."/>
            <person name="Zoghbi H."/>
            <person name="Zorilla S."/>
            <person name="Buck D."/>
            <person name="Reinhardt R."/>
            <person name="Poustka A."/>
            <person name="Rosenthal A."/>
            <person name="Lehrach H."/>
            <person name="Meindl A."/>
            <person name="Minx P.J."/>
            <person name="Hillier L.W."/>
            <person name="Willard H.F."/>
            <person name="Wilson R.K."/>
            <person name="Waterston R.H."/>
            <person name="Rice C.M."/>
            <person name="Vaudin M."/>
            <person name="Coulson A."/>
            <person name="Nelson D.L."/>
            <person name="Weinstock G."/>
            <person name="Sulston J.E."/>
            <person name="Durbin R.M."/>
            <person name="Hubbard T."/>
            <person name="Gibbs R.A."/>
            <person name="Beck S."/>
            <person name="Rogers J."/>
            <person name="Bentley D.R."/>
        </authorList>
    </citation>
    <scope>NUCLEOTIDE SEQUENCE [LARGE SCALE GENOMIC DNA]</scope>
</reference>
<reference key="5">
    <citation type="journal article" date="2004" name="Genome Res.">
        <title>The status, quality, and expansion of the NIH full-length cDNA project: the Mammalian Gene Collection (MGC).</title>
        <authorList>
            <consortium name="The MGC Project Team"/>
        </authorList>
    </citation>
    <scope>NUCLEOTIDE SEQUENCE [LARGE SCALE MRNA] (ISOFORMS 1 AND 4)</scope>
    <source>
        <tissue>Brain</tissue>
    </source>
</reference>
<reference key="6">
    <citation type="journal article" date="2000" name="Hum. Mol. Genet.">
        <title>Large-scale methylation analysis of human genomic DNA reveals tissue-specific differences between the methylation profiles of genes and pseudogenes.</title>
        <authorList>
            <person name="Grunau C."/>
            <person name="Hindermann W."/>
            <person name="Rosenthal A."/>
        </authorList>
    </citation>
    <scope>TISSUE SPECIFICITY</scope>
</reference>
<reference key="7">
    <citation type="journal article" date="2011" name="FEBS J.">
        <title>Serine-arginine protein kinases: a small protein kinase family with a large cellular presence.</title>
        <authorList>
            <person name="Giannakouros T."/>
            <person name="Nikolakaki E."/>
            <person name="Mylonis I."/>
            <person name="Georgatsou E."/>
        </authorList>
    </citation>
    <scope>REVIEW ON FUNCTION</scope>
</reference>
<reference key="8">
    <citation type="journal article" date="2007" name="Nature">
        <title>Patterns of somatic mutation in human cancer genomes.</title>
        <authorList>
            <person name="Greenman C."/>
            <person name="Stephens P."/>
            <person name="Smith R."/>
            <person name="Dalgliesh G.L."/>
            <person name="Hunter C."/>
            <person name="Bignell G."/>
            <person name="Davies H."/>
            <person name="Teague J."/>
            <person name="Butler A."/>
            <person name="Stevens C."/>
            <person name="Edkins S."/>
            <person name="O'Meara S."/>
            <person name="Vastrik I."/>
            <person name="Schmidt E.E."/>
            <person name="Avis T."/>
            <person name="Barthorpe S."/>
            <person name="Bhamra G."/>
            <person name="Buck G."/>
            <person name="Choudhury B."/>
            <person name="Clements J."/>
            <person name="Cole J."/>
            <person name="Dicks E."/>
            <person name="Forbes S."/>
            <person name="Gray K."/>
            <person name="Halliday K."/>
            <person name="Harrison R."/>
            <person name="Hills K."/>
            <person name="Hinton J."/>
            <person name="Jenkinson A."/>
            <person name="Jones D."/>
            <person name="Menzies A."/>
            <person name="Mironenko T."/>
            <person name="Perry J."/>
            <person name="Raine K."/>
            <person name="Richardson D."/>
            <person name="Shepherd R."/>
            <person name="Small A."/>
            <person name="Tofts C."/>
            <person name="Varian J."/>
            <person name="Webb T."/>
            <person name="West S."/>
            <person name="Widaa S."/>
            <person name="Yates A."/>
            <person name="Cahill D.P."/>
            <person name="Louis D.N."/>
            <person name="Goldstraw P."/>
            <person name="Nicholson A.G."/>
            <person name="Brasseur F."/>
            <person name="Looijenga L."/>
            <person name="Weber B.L."/>
            <person name="Chiew Y.-E."/>
            <person name="DeFazio A."/>
            <person name="Greaves M.F."/>
            <person name="Green A.R."/>
            <person name="Campbell P."/>
            <person name="Birney E."/>
            <person name="Easton D.F."/>
            <person name="Chenevix-Trench G."/>
            <person name="Tan M.-H."/>
            <person name="Khoo S.K."/>
            <person name="Teh B.T."/>
            <person name="Yuen S.T."/>
            <person name="Leung S.Y."/>
            <person name="Wooster R."/>
            <person name="Futreal P.A."/>
            <person name="Stratton M.R."/>
        </authorList>
    </citation>
    <scope>VARIANTS [LARGE SCALE ANALYSIS] CYS-101; GLU-114 AND LYS-233</scope>
</reference>
<reference key="9">
    <citation type="journal article" date="2024" name="Ann. Neurol.">
        <title>SRPK3 is essential for cognitive and ocular development in humans and zebrafish, explaining X-linked intellectual disability.</title>
        <authorList>
            <person name="Roychaudhury A."/>
            <person name="Lee Y.R."/>
            <person name="Choi T.I."/>
            <person name="Thomas M.G."/>
            <person name="Khan T.N."/>
            <person name="Yousaf H."/>
            <person name="Skinner C."/>
            <person name="Maconachie G."/>
            <person name="Crosier M."/>
            <person name="Horak H."/>
            <person name="Constantinescu C.S."/>
            <person name="Kim T.Y."/>
            <person name="Lee K.H."/>
            <person name="Kyung J.J."/>
            <person name="Wang T."/>
            <person name="Ku B."/>
            <person name="Chodirker B.N."/>
            <person name="Hammer M.F."/>
            <person name="Gottlob I."/>
            <person name="Norton W.H.J."/>
            <person name="Gerlai R."/>
            <person name="Kim H.G."/>
            <person name="Graziano C."/>
            <person name="Pippucci T."/>
            <person name="Iovino E."/>
            <person name="Montanari F."/>
            <person name="Severi G."/>
            <person name="Toro C."/>
            <person name="Boerkoel C.F."/>
            <person name="Cha H.S."/>
            <person name="Choi C.Y."/>
            <person name="Kim S."/>
            <person name="Yoon J.H."/>
            <person name="Gilmore K."/>
            <person name="Vora N.L."/>
            <person name="Davis E.E."/>
            <person name="Chudley A.E."/>
            <person name="Schwartz C.E."/>
            <person name="Kim C.H."/>
        </authorList>
    </citation>
    <scope>VARIANTS XLID114 ASP-159; LEU-318; ASN-458 AND LYS-529</scope>
    <scope>INVOLVEMENT IN XLID114</scope>
    <scope>CHARACTERIZATION OF VARIANTS XLID114 ASP-159 AND ASN-458</scope>
    <scope>SUBCELLULAR LOCATION</scope>
    <scope>TISSUE SPECIFICITY</scope>
</reference>
<organism>
    <name type="scientific">Homo sapiens</name>
    <name type="common">Human</name>
    <dbReference type="NCBI Taxonomy" id="9606"/>
    <lineage>
        <taxon>Eukaryota</taxon>
        <taxon>Metazoa</taxon>
        <taxon>Chordata</taxon>
        <taxon>Craniata</taxon>
        <taxon>Vertebrata</taxon>
        <taxon>Euteleostomi</taxon>
        <taxon>Mammalia</taxon>
        <taxon>Eutheria</taxon>
        <taxon>Euarchontoglires</taxon>
        <taxon>Primates</taxon>
        <taxon>Haplorrhini</taxon>
        <taxon>Catarrhini</taxon>
        <taxon>Hominidae</taxon>
        <taxon>Homo</taxon>
    </lineage>
</organism>
<evidence type="ECO:0000250" key="1">
    <source>
        <dbReference type="UniProtKB" id="Q9Z0G2"/>
    </source>
</evidence>
<evidence type="ECO:0000255" key="2">
    <source>
        <dbReference type="PROSITE-ProRule" id="PRU00159"/>
    </source>
</evidence>
<evidence type="ECO:0000255" key="3">
    <source>
        <dbReference type="PROSITE-ProRule" id="PRU10027"/>
    </source>
</evidence>
<evidence type="ECO:0000256" key="4">
    <source>
        <dbReference type="SAM" id="MobiDB-lite"/>
    </source>
</evidence>
<evidence type="ECO:0000269" key="5">
    <source>
    </source>
</evidence>
<evidence type="ECO:0000269" key="6">
    <source>
    </source>
</evidence>
<evidence type="ECO:0000269" key="7">
    <source>
    </source>
</evidence>
<evidence type="ECO:0000303" key="8">
    <source>
    </source>
</evidence>
<evidence type="ECO:0000303" key="9">
    <source ref="1"/>
</evidence>
<evidence type="ECO:0000303" key="10">
    <source ref="2"/>
</evidence>
<evidence type="ECO:0000305" key="11"/>
<proteinExistence type="evidence at protein level"/>
<protein>
    <recommendedName>
        <fullName>SRSF protein kinase 3</fullName>
        <ecNumber>2.7.11.1</ecNumber>
    </recommendedName>
    <alternativeName>
        <fullName>Muscle-specific serine kinase 1</fullName>
        <shortName>MSSK-1</shortName>
    </alternativeName>
    <alternativeName>
        <fullName>Serine/arginine-rich protein-specific kinase 3</fullName>
        <shortName>SR-protein-specific kinase 3</shortName>
    </alternativeName>
    <alternativeName>
        <fullName>Serine/threonine-protein kinase 23</fullName>
    </alternativeName>
</protein>
<keyword id="KW-0025">Alternative splicing</keyword>
<keyword id="KW-0067">ATP-binding</keyword>
<keyword id="KW-0963">Cytoplasm</keyword>
<keyword id="KW-0217">Developmental protein</keyword>
<keyword id="KW-0221">Differentiation</keyword>
<keyword id="KW-0991">Intellectual disability</keyword>
<keyword id="KW-0418">Kinase</keyword>
<keyword id="KW-0517">Myogenesis</keyword>
<keyword id="KW-0547">Nucleotide-binding</keyword>
<keyword id="KW-0539">Nucleus</keyword>
<keyword id="KW-0597">Phosphoprotein</keyword>
<keyword id="KW-1267">Proteomics identification</keyword>
<keyword id="KW-1185">Reference proteome</keyword>
<keyword id="KW-0723">Serine/threonine-protein kinase</keyword>
<keyword id="KW-0808">Transferase</keyword>
<sequence length="567" mass="62014">MSASTGGGGDSGGSGGSSSSSQASCGPESSGSELALATPVPQMLQGLLGSDDEEQEDPKDYCKGGYHPVKIGDVFNGRYHVVRKLGWGHFSTVWLCWDIQRKRFVALKVVKSAGHYTETAVDEIKLLKCVRDSDPSDPKRETIVQLIDDFRISGVNGVHVCMVLEVLGHQLLKWIIKSNYQGLPVPCVKSIVRQVLHGLDYLHTKCKIIHTDIKPENILLCVGDAYIRRLAAEATEWQQAGAPPPSRSIVSTAPQEVLQTGKLSKNKRKKMRRKRKQQKRLLEERLRDLQRLEAMEAATQAEDSGLRLDGGSGSTSSSGCHPGGARAGPSPASSSPAPGGGRSLSAGSQTSGFSGSLFSPASCSILSGSSNQRETGGLLSPSTPFGASNLLVNPLEPQNADKIKIKIADLGNACWVHKHFTEDIQTRQYRAVEVLIGAEYGPPADIWSTACMAFELATGDYLFEPHSGEDYSRDEDHIAHIVELLGDIPPAFALSGRYSREFFNRRGELRHIHNLKHWGLYEVLMEKYEWPLEQATQFSAFLLPMMEYIPEKRASAADCLQHPWLNP</sequence>
<feature type="chain" id="PRO_0000086709" description="SRSF protein kinase 3">
    <location>
        <begin position="1"/>
        <end position="567"/>
    </location>
</feature>
<feature type="domain" description="Protein kinase" evidence="2">
    <location>
        <begin position="79"/>
        <end position="565"/>
    </location>
</feature>
<feature type="region of interest" description="Disordered" evidence="4">
    <location>
        <begin position="1"/>
        <end position="36"/>
    </location>
</feature>
<feature type="region of interest" description="Disordered" evidence="4">
    <location>
        <begin position="238"/>
        <end position="283"/>
    </location>
</feature>
<feature type="region of interest" description="Disordered" evidence="4">
    <location>
        <begin position="298"/>
        <end position="351"/>
    </location>
</feature>
<feature type="compositionally biased region" description="Gly residues" evidence="4">
    <location>
        <begin position="1"/>
        <end position="16"/>
    </location>
</feature>
<feature type="compositionally biased region" description="Low complexity" evidence="4">
    <location>
        <begin position="17"/>
        <end position="32"/>
    </location>
</feature>
<feature type="compositionally biased region" description="Polar residues" evidence="4">
    <location>
        <begin position="248"/>
        <end position="258"/>
    </location>
</feature>
<feature type="compositionally biased region" description="Basic residues" evidence="4">
    <location>
        <begin position="264"/>
        <end position="279"/>
    </location>
</feature>
<feature type="compositionally biased region" description="Low complexity" evidence="4">
    <location>
        <begin position="327"/>
        <end position="348"/>
    </location>
</feature>
<feature type="active site" description="Proton acceptor" evidence="2 3">
    <location>
        <position position="212"/>
    </location>
</feature>
<feature type="binding site" evidence="2">
    <location>
        <begin position="85"/>
        <end position="93"/>
    </location>
    <ligand>
        <name>ATP</name>
        <dbReference type="ChEBI" id="CHEBI:30616"/>
    </ligand>
</feature>
<feature type="binding site" evidence="2">
    <location>
        <position position="108"/>
    </location>
    <ligand>
        <name>ATP</name>
        <dbReference type="ChEBI" id="CHEBI:30616"/>
    </ligand>
</feature>
<feature type="modified residue" description="Phosphoserine" evidence="1">
    <location>
        <position position="50"/>
    </location>
</feature>
<feature type="modified residue" description="Phosphoserine" evidence="1">
    <location>
        <position position="330"/>
    </location>
</feature>
<feature type="splice variant" id="VSP_040939" description="In isoform 2." evidence="9">
    <location>
        <begin position="1"/>
        <end position="42"/>
    </location>
</feature>
<feature type="splice variant" id="VSP_040940" description="In isoform 2, isoform 3 and isoform 4." evidence="8 9 10">
    <location>
        <position position="259"/>
    </location>
</feature>
<feature type="splice variant" id="VSP_040941" description="In isoform 2 and isoform 3." evidence="9">
    <location>
        <begin position="318"/>
        <end position="350"/>
    </location>
</feature>
<feature type="sequence variant" id="VAR_041119" description="In dbSNP:rs55910507." evidence="6">
    <original>R</original>
    <variation>C</variation>
    <location>
        <position position="101"/>
    </location>
</feature>
<feature type="sequence variant" id="VAR_041120" description="In dbSNP:rs35865042." evidence="6">
    <original>G</original>
    <variation>E</variation>
    <location>
        <position position="114"/>
    </location>
</feature>
<feature type="sequence variant" id="VAR_090167" description="In XLID114; uncertain significance; loss of localization to nucleus." evidence="7">
    <original>H</original>
    <variation>D</variation>
    <location>
        <position position="159"/>
    </location>
</feature>
<feature type="sequence variant" id="VAR_041121" description="In dbSNP:rs34497419." evidence="6">
    <original>E</original>
    <variation>K</variation>
    <location>
        <position position="233"/>
    </location>
</feature>
<feature type="sequence variant" id="VAR_090168" description="In XLID114; uncertain significance." evidence="7">
    <original>S</original>
    <variation>L</variation>
    <location>
        <position position="318"/>
    </location>
</feature>
<feature type="sequence variant" id="VAR_090169" description="In XLID114; uncertain significance; decreased localization to nucleus." evidence="7">
    <original>T</original>
    <variation>N</variation>
    <location>
        <position position="458"/>
    </location>
</feature>
<feature type="sequence variant" id="VAR_090170" description="In XLID114; uncertain significance; dbSNP:rs782107189." evidence="7">
    <original>E</original>
    <variation>K</variation>
    <location>
        <position position="529"/>
    </location>
</feature>
<dbReference type="EC" id="2.7.11.1"/>
<dbReference type="EMBL" id="AF027406">
    <property type="protein sequence ID" value="AAD01848.1"/>
    <property type="molecule type" value="mRNA"/>
</dbReference>
<dbReference type="EMBL" id="U82808">
    <property type="protein sequence ID" value="AAD00539.1"/>
    <property type="molecule type" value="mRNA"/>
</dbReference>
<dbReference type="EMBL" id="DQ099381">
    <property type="protein sequence ID" value="AAZ13757.1"/>
    <property type="molecule type" value="mRNA"/>
</dbReference>
<dbReference type="EMBL" id="AK301749">
    <property type="protein sequence ID" value="BAG63211.1"/>
    <property type="molecule type" value="mRNA"/>
</dbReference>
<dbReference type="EMBL" id="U52111">
    <property type="status" value="NOT_ANNOTATED_CDS"/>
    <property type="molecule type" value="Genomic_DNA"/>
</dbReference>
<dbReference type="EMBL" id="BC092416">
    <property type="protein sequence ID" value="AAH92416.1"/>
    <property type="molecule type" value="mRNA"/>
</dbReference>
<dbReference type="EMBL" id="BC117124">
    <property type="protein sequence ID" value="AAI17125.1"/>
    <property type="molecule type" value="mRNA"/>
</dbReference>
<dbReference type="CCDS" id="CCDS35441.1">
    <molecule id="Q9UPE1-1"/>
</dbReference>
<dbReference type="CCDS" id="CCDS55537.1">
    <molecule id="Q9UPE1-3"/>
</dbReference>
<dbReference type="CCDS" id="CCDS55538.1">
    <molecule id="Q9UPE1-4"/>
</dbReference>
<dbReference type="RefSeq" id="NP_001164231.1">
    <molecule id="Q9UPE1-4"/>
    <property type="nucleotide sequence ID" value="NM_001170760.2"/>
</dbReference>
<dbReference type="RefSeq" id="NP_001164232.1">
    <molecule id="Q9UPE1-3"/>
    <property type="nucleotide sequence ID" value="NM_001170761.2"/>
</dbReference>
<dbReference type="RefSeq" id="NP_055185.2">
    <molecule id="Q9UPE1-1"/>
    <property type="nucleotide sequence ID" value="NM_014370.4"/>
</dbReference>
<dbReference type="SMR" id="Q9UPE1"/>
<dbReference type="BioGRID" id="117745">
    <property type="interactions" value="216"/>
</dbReference>
<dbReference type="FunCoup" id="Q9UPE1">
    <property type="interactions" value="442"/>
</dbReference>
<dbReference type="IntAct" id="Q9UPE1">
    <property type="interactions" value="182"/>
</dbReference>
<dbReference type="MINT" id="Q9UPE1"/>
<dbReference type="STRING" id="9606.ENSP00000359119"/>
<dbReference type="BindingDB" id="Q9UPE1"/>
<dbReference type="ChEMBL" id="CHEMBL5415"/>
<dbReference type="DrugCentral" id="Q9UPE1"/>
<dbReference type="GuidetoPHARMACOLOGY" id="2210"/>
<dbReference type="iPTMnet" id="Q9UPE1"/>
<dbReference type="PhosphoSitePlus" id="Q9UPE1"/>
<dbReference type="BioMuta" id="SRPK3"/>
<dbReference type="DMDM" id="332278151"/>
<dbReference type="jPOST" id="Q9UPE1"/>
<dbReference type="MassIVE" id="Q9UPE1"/>
<dbReference type="PaxDb" id="9606-ENSP00000359119"/>
<dbReference type="PeptideAtlas" id="Q9UPE1"/>
<dbReference type="ProteomicsDB" id="85367">
    <molecule id="Q9UPE1-1"/>
</dbReference>
<dbReference type="ProteomicsDB" id="85368">
    <molecule id="Q9UPE1-2"/>
</dbReference>
<dbReference type="ProteomicsDB" id="85369">
    <molecule id="Q9UPE1-3"/>
</dbReference>
<dbReference type="ProteomicsDB" id="85370">
    <molecule id="Q9UPE1-4"/>
</dbReference>
<dbReference type="Antibodypedia" id="30953">
    <property type="antibodies" value="165 antibodies from 26 providers"/>
</dbReference>
<dbReference type="DNASU" id="26576"/>
<dbReference type="Ensembl" id="ENST00000370101.8">
    <molecule id="Q9UPE1-1"/>
    <property type="protein sequence ID" value="ENSP00000359119.3"/>
    <property type="gene ID" value="ENSG00000184343.11"/>
</dbReference>
<dbReference type="Ensembl" id="ENST00000370104.5">
    <molecule id="Q9UPE1-4"/>
    <property type="protein sequence ID" value="ENSP00000359122.1"/>
    <property type="gene ID" value="ENSG00000184343.11"/>
</dbReference>
<dbReference type="Ensembl" id="ENST00000393786.7">
    <molecule id="Q9UPE1-3"/>
    <property type="protein sequence ID" value="ENSP00000377376.3"/>
    <property type="gene ID" value="ENSG00000184343.11"/>
</dbReference>
<dbReference type="GeneID" id="26576"/>
<dbReference type="KEGG" id="hsa:26576"/>
<dbReference type="MANE-Select" id="ENST00000370101.8">
    <property type="protein sequence ID" value="ENSP00000359119.3"/>
    <property type="RefSeq nucleotide sequence ID" value="NM_014370.4"/>
    <property type="RefSeq protein sequence ID" value="NP_055185.2"/>
</dbReference>
<dbReference type="UCSC" id="uc004fil.4">
    <molecule id="Q9UPE1-1"/>
    <property type="organism name" value="human"/>
</dbReference>
<dbReference type="AGR" id="HGNC:11402"/>
<dbReference type="CTD" id="26576"/>
<dbReference type="DisGeNET" id="26576"/>
<dbReference type="GeneCards" id="SRPK3"/>
<dbReference type="HGNC" id="HGNC:11402">
    <property type="gene designation" value="SRPK3"/>
</dbReference>
<dbReference type="HPA" id="ENSG00000184343">
    <property type="expression patterns" value="Tissue enhanced (skeletal muscle, tongue)"/>
</dbReference>
<dbReference type="MalaCards" id="SRPK3"/>
<dbReference type="MIM" id="301002">
    <property type="type" value="gene"/>
</dbReference>
<dbReference type="MIM" id="301134">
    <property type="type" value="phenotype"/>
</dbReference>
<dbReference type="neXtProt" id="NX_Q9UPE1"/>
<dbReference type="OpenTargets" id="ENSG00000184343"/>
<dbReference type="PharmGKB" id="PA162404805"/>
<dbReference type="VEuPathDB" id="HostDB:ENSG00000184343"/>
<dbReference type="eggNOG" id="KOG1290">
    <property type="taxonomic scope" value="Eukaryota"/>
</dbReference>
<dbReference type="GeneTree" id="ENSGT00940000157877"/>
<dbReference type="InParanoid" id="Q9UPE1"/>
<dbReference type="OMA" id="MDNVTLC"/>
<dbReference type="OrthoDB" id="2649at2759"/>
<dbReference type="PAN-GO" id="Q9UPE1">
    <property type="GO annotations" value="6 GO annotations based on evolutionary models"/>
</dbReference>
<dbReference type="TreeFam" id="TF105334"/>
<dbReference type="BRENDA" id="2.7.11.1">
    <property type="organism ID" value="2681"/>
</dbReference>
<dbReference type="PathwayCommons" id="Q9UPE1"/>
<dbReference type="SignaLink" id="Q9UPE1"/>
<dbReference type="BioGRID-ORCS" id="26576">
    <property type="hits" value="8 hits in 799 CRISPR screens"/>
</dbReference>
<dbReference type="ChiTaRS" id="SRPK3">
    <property type="organism name" value="human"/>
</dbReference>
<dbReference type="GenomeRNAi" id="26576"/>
<dbReference type="Pharos" id="Q9UPE1">
    <property type="development level" value="Tchem"/>
</dbReference>
<dbReference type="PRO" id="PR:Q9UPE1"/>
<dbReference type="Proteomes" id="UP000005640">
    <property type="component" value="Chromosome X"/>
</dbReference>
<dbReference type="RNAct" id="Q9UPE1">
    <property type="molecule type" value="protein"/>
</dbReference>
<dbReference type="Bgee" id="ENSG00000184343">
    <property type="expression patterns" value="Expressed in hindlimb stylopod muscle and 137 other cell types or tissues"/>
</dbReference>
<dbReference type="ExpressionAtlas" id="Q9UPE1">
    <property type="expression patterns" value="baseline and differential"/>
</dbReference>
<dbReference type="GO" id="GO:0005737">
    <property type="term" value="C:cytoplasm"/>
    <property type="evidence" value="ECO:0000314"/>
    <property type="project" value="UniProtKB"/>
</dbReference>
<dbReference type="GO" id="GO:0005634">
    <property type="term" value="C:nucleus"/>
    <property type="evidence" value="ECO:0000314"/>
    <property type="project" value="UniProtKB"/>
</dbReference>
<dbReference type="GO" id="GO:0005524">
    <property type="term" value="F:ATP binding"/>
    <property type="evidence" value="ECO:0007669"/>
    <property type="project" value="UniProtKB-KW"/>
</dbReference>
<dbReference type="GO" id="GO:0106310">
    <property type="term" value="F:protein serine kinase activity"/>
    <property type="evidence" value="ECO:0007669"/>
    <property type="project" value="RHEA"/>
</dbReference>
<dbReference type="GO" id="GO:0004674">
    <property type="term" value="F:protein serine/threonine kinase activity"/>
    <property type="evidence" value="ECO:0000318"/>
    <property type="project" value="GO_Central"/>
</dbReference>
<dbReference type="GO" id="GO:0030154">
    <property type="term" value="P:cell differentiation"/>
    <property type="evidence" value="ECO:0007669"/>
    <property type="project" value="UniProtKB-KW"/>
</dbReference>
<dbReference type="GO" id="GO:0035556">
    <property type="term" value="P:intracellular signal transduction"/>
    <property type="evidence" value="ECO:0000318"/>
    <property type="project" value="GO_Central"/>
</dbReference>
<dbReference type="GO" id="GO:0060537">
    <property type="term" value="P:muscle tissue development"/>
    <property type="evidence" value="ECO:0000250"/>
    <property type="project" value="UniProtKB"/>
</dbReference>
<dbReference type="GO" id="GO:0050684">
    <property type="term" value="P:regulation of mRNA processing"/>
    <property type="evidence" value="ECO:0000318"/>
    <property type="project" value="GO_Central"/>
</dbReference>
<dbReference type="GO" id="GO:0007519">
    <property type="term" value="P:skeletal muscle tissue development"/>
    <property type="evidence" value="ECO:0007669"/>
    <property type="project" value="Ensembl"/>
</dbReference>
<dbReference type="GO" id="GO:0000245">
    <property type="term" value="P:spliceosomal complex assembly"/>
    <property type="evidence" value="ECO:0000318"/>
    <property type="project" value="GO_Central"/>
</dbReference>
<dbReference type="CDD" id="cd14218">
    <property type="entry name" value="STKc_SRPK3"/>
    <property type="match status" value="1"/>
</dbReference>
<dbReference type="FunFam" id="1.10.510.10:FF:001095">
    <property type="entry name" value="SRPK3 isoform 3"/>
    <property type="match status" value="1"/>
</dbReference>
<dbReference type="FunFam" id="1.10.510.10:FF:000105">
    <property type="entry name" value="SRSF protein kinase 2"/>
    <property type="match status" value="1"/>
</dbReference>
<dbReference type="FunFam" id="3.30.200.20:FF:000163">
    <property type="entry name" value="SRSF protein kinase 2 isoform X1"/>
    <property type="match status" value="1"/>
</dbReference>
<dbReference type="Gene3D" id="3.30.200.20">
    <property type="entry name" value="Phosphorylase Kinase, domain 1"/>
    <property type="match status" value="1"/>
</dbReference>
<dbReference type="Gene3D" id="1.10.510.10">
    <property type="entry name" value="Transferase(Phosphotransferase) domain 1"/>
    <property type="match status" value="2"/>
</dbReference>
<dbReference type="InterPro" id="IPR011009">
    <property type="entry name" value="Kinase-like_dom_sf"/>
</dbReference>
<dbReference type="InterPro" id="IPR000719">
    <property type="entry name" value="Prot_kinase_dom"/>
</dbReference>
<dbReference type="InterPro" id="IPR017441">
    <property type="entry name" value="Protein_kinase_ATP_BS"/>
</dbReference>
<dbReference type="InterPro" id="IPR008271">
    <property type="entry name" value="Ser/Thr_kinase_AS"/>
</dbReference>
<dbReference type="InterPro" id="IPR051334">
    <property type="entry name" value="SRPK"/>
</dbReference>
<dbReference type="PANTHER" id="PTHR47634">
    <property type="entry name" value="PROTEIN KINASE DOMAIN-CONTAINING PROTEIN-RELATED"/>
    <property type="match status" value="1"/>
</dbReference>
<dbReference type="PANTHER" id="PTHR47634:SF20">
    <property type="entry name" value="SRSF PROTEIN KINASE 3"/>
    <property type="match status" value="1"/>
</dbReference>
<dbReference type="Pfam" id="PF00069">
    <property type="entry name" value="Pkinase"/>
    <property type="match status" value="2"/>
</dbReference>
<dbReference type="SMART" id="SM00220">
    <property type="entry name" value="S_TKc"/>
    <property type="match status" value="1"/>
</dbReference>
<dbReference type="SUPFAM" id="SSF56112">
    <property type="entry name" value="Protein kinase-like (PK-like)"/>
    <property type="match status" value="1"/>
</dbReference>
<dbReference type="PROSITE" id="PS00107">
    <property type="entry name" value="PROTEIN_KINASE_ATP"/>
    <property type="match status" value="1"/>
</dbReference>
<dbReference type="PROSITE" id="PS50011">
    <property type="entry name" value="PROTEIN_KINASE_DOM"/>
    <property type="match status" value="1"/>
</dbReference>
<dbReference type="PROSITE" id="PS00108">
    <property type="entry name" value="PROTEIN_KINASE_ST"/>
    <property type="match status" value="1"/>
</dbReference>